<evidence type="ECO:0000250" key="1"/>
<evidence type="ECO:0000255" key="2"/>
<evidence type="ECO:0000305" key="3"/>
<organism>
    <name type="scientific">Haemophilus parainfluenzae</name>
    <dbReference type="NCBI Taxonomy" id="729"/>
    <lineage>
        <taxon>Bacteria</taxon>
        <taxon>Pseudomonadati</taxon>
        <taxon>Pseudomonadota</taxon>
        <taxon>Gammaproteobacteria</taxon>
        <taxon>Pasteurellales</taxon>
        <taxon>Pasteurellaceae</taxon>
        <taxon>Haemophilus</taxon>
    </lineage>
</organism>
<keyword id="KW-0049">Antioxidant</keyword>
<keyword id="KW-0186">Copper</keyword>
<keyword id="KW-1015">Disulfide bond</keyword>
<keyword id="KW-0479">Metal-binding</keyword>
<keyword id="KW-0560">Oxidoreductase</keyword>
<keyword id="KW-0574">Periplasm</keyword>
<keyword id="KW-0732">Signal</keyword>
<keyword id="KW-0862">Zinc</keyword>
<sequence length="187" mass="19510">MMKMKTLLALAISGICAAGVANAHDHMAKPAGPSIEVKVQQLDPANGNKDVGTVTITESNYGLVFTPNLQGLAEGLHGFHIHENPSCDPKEKDGKLTSGLAAGGHWDPKGAKQHGYPWQDDAHLGDLPALTVLHDGTATNPVLAPRLKKLDEVRGHSIMIHAGGDNHSDHPAPLGGGGPRMACGVIK</sequence>
<dbReference type="EC" id="1.15.1.1"/>
<dbReference type="EMBL" id="M84013">
    <property type="protein sequence ID" value="AAA24954.1"/>
    <property type="molecule type" value="mRNA"/>
</dbReference>
<dbReference type="PIR" id="B41654">
    <property type="entry name" value="B41654"/>
</dbReference>
<dbReference type="SMR" id="P25842"/>
<dbReference type="GO" id="GO:0042597">
    <property type="term" value="C:periplasmic space"/>
    <property type="evidence" value="ECO:0007669"/>
    <property type="project" value="UniProtKB-SubCell"/>
</dbReference>
<dbReference type="GO" id="GO:0005507">
    <property type="term" value="F:copper ion binding"/>
    <property type="evidence" value="ECO:0007669"/>
    <property type="project" value="InterPro"/>
</dbReference>
<dbReference type="GO" id="GO:0004784">
    <property type="term" value="F:superoxide dismutase activity"/>
    <property type="evidence" value="ECO:0007669"/>
    <property type="project" value="UniProtKB-EC"/>
</dbReference>
<dbReference type="CDD" id="cd00305">
    <property type="entry name" value="Cu-Zn_Superoxide_Dismutase"/>
    <property type="match status" value="1"/>
</dbReference>
<dbReference type="FunFam" id="2.60.40.200:FF:000002">
    <property type="entry name" value="Superoxide dismutase [Cu-Zn]"/>
    <property type="match status" value="1"/>
</dbReference>
<dbReference type="Gene3D" id="2.60.40.200">
    <property type="entry name" value="Superoxide dismutase, copper/zinc binding domain"/>
    <property type="match status" value="1"/>
</dbReference>
<dbReference type="InterPro" id="IPR036423">
    <property type="entry name" value="SOD-like_Cu/Zn_dom_sf"/>
</dbReference>
<dbReference type="InterPro" id="IPR024134">
    <property type="entry name" value="SOD_Cu/Zn_/chaperone"/>
</dbReference>
<dbReference type="InterPro" id="IPR018152">
    <property type="entry name" value="SOD_Cu/Zn_BS"/>
</dbReference>
<dbReference type="InterPro" id="IPR001424">
    <property type="entry name" value="SOD_Cu_Zn_dom"/>
</dbReference>
<dbReference type="NCBIfam" id="NF007628">
    <property type="entry name" value="PRK10290.1"/>
    <property type="match status" value="1"/>
</dbReference>
<dbReference type="PANTHER" id="PTHR10003">
    <property type="entry name" value="SUPEROXIDE DISMUTASE CU-ZN -RELATED"/>
    <property type="match status" value="1"/>
</dbReference>
<dbReference type="Pfam" id="PF00080">
    <property type="entry name" value="Sod_Cu"/>
    <property type="match status" value="1"/>
</dbReference>
<dbReference type="SUPFAM" id="SSF49329">
    <property type="entry name" value="Cu,Zn superoxide dismutase-like"/>
    <property type="match status" value="1"/>
</dbReference>
<dbReference type="PROSITE" id="PS00087">
    <property type="entry name" value="SOD_CU_ZN_1"/>
    <property type="match status" value="1"/>
</dbReference>
<dbReference type="PROSITE" id="PS00332">
    <property type="entry name" value="SOD_CU_ZN_2"/>
    <property type="match status" value="1"/>
</dbReference>
<feature type="signal peptide" evidence="2">
    <location>
        <begin position="1"/>
        <end position="23"/>
    </location>
</feature>
<feature type="chain" id="PRO_0000032830" description="Superoxide dismutase [Cu-Zn]">
    <location>
        <begin position="24"/>
        <end position="187"/>
    </location>
</feature>
<feature type="binding site" evidence="1">
    <location>
        <position position="80"/>
    </location>
    <ligand>
        <name>Cu cation</name>
        <dbReference type="ChEBI" id="CHEBI:23378"/>
        <note>catalytic</note>
    </ligand>
</feature>
<feature type="binding site" evidence="1">
    <location>
        <position position="82"/>
    </location>
    <ligand>
        <name>Cu cation</name>
        <dbReference type="ChEBI" id="CHEBI:23378"/>
        <note>catalytic</note>
    </ligand>
</feature>
<feature type="binding site" evidence="1">
    <location>
        <position position="105"/>
    </location>
    <ligand>
        <name>Cu cation</name>
        <dbReference type="ChEBI" id="CHEBI:23378"/>
        <note>catalytic</note>
    </ligand>
</feature>
<feature type="binding site" evidence="1">
    <location>
        <position position="105"/>
    </location>
    <ligand>
        <name>Zn(2+)</name>
        <dbReference type="ChEBI" id="CHEBI:29105"/>
        <note>structural</note>
    </ligand>
</feature>
<feature type="binding site" evidence="1">
    <location>
        <position position="114"/>
    </location>
    <ligand>
        <name>Zn(2+)</name>
        <dbReference type="ChEBI" id="CHEBI:29105"/>
        <note>structural</note>
    </ligand>
</feature>
<feature type="binding site" evidence="1">
    <location>
        <position position="123"/>
    </location>
    <ligand>
        <name>Zn(2+)</name>
        <dbReference type="ChEBI" id="CHEBI:29105"/>
        <note>structural</note>
    </ligand>
</feature>
<feature type="binding site" evidence="1">
    <location>
        <position position="126"/>
    </location>
    <ligand>
        <name>Zn(2+)</name>
        <dbReference type="ChEBI" id="CHEBI:29105"/>
        <note>structural</note>
    </ligand>
</feature>
<feature type="binding site" evidence="1">
    <location>
        <position position="161"/>
    </location>
    <ligand>
        <name>Cu cation</name>
        <dbReference type="ChEBI" id="CHEBI:23378"/>
        <note>catalytic</note>
    </ligand>
</feature>
<feature type="disulfide bond" evidence="1">
    <location>
        <begin position="87"/>
        <end position="183"/>
    </location>
</feature>
<name>SODC_HAEPA</name>
<accession>P25842</accession>
<protein>
    <recommendedName>
        <fullName>Superoxide dismutase [Cu-Zn]</fullName>
        <ecNumber>1.15.1.1</ecNumber>
    </recommendedName>
</protein>
<reference key="1">
    <citation type="journal article" date="1991" name="J. Bacteriol.">
        <title>Copper-zinc superoxide dismutase of Haemophilus influenzae and H. parainfluenzae.</title>
        <authorList>
            <person name="Kroll J.S."/>
            <person name="Langford P.R."/>
            <person name="Loynds B.M."/>
        </authorList>
    </citation>
    <scope>NUCLEOTIDE SEQUENCE [MRNA]</scope>
    <source>
        <strain>1391</strain>
    </source>
</reference>
<proteinExistence type="evidence at transcript level"/>
<gene>
    <name type="primary">sodC</name>
</gene>
<comment type="function">
    <text>Destroys radicals which are normally produced within the cells and which are toxic to biological systems.</text>
</comment>
<comment type="function">
    <text>May confer survival advantage by accelerating dismutation of superoxide of environmental origin to hydrogen peroxide, disruptive to the normal mucociliary clearance process in the host.</text>
</comment>
<comment type="catalytic activity">
    <reaction>
        <text>2 superoxide + 2 H(+) = H2O2 + O2</text>
        <dbReference type="Rhea" id="RHEA:20696"/>
        <dbReference type="ChEBI" id="CHEBI:15378"/>
        <dbReference type="ChEBI" id="CHEBI:15379"/>
        <dbReference type="ChEBI" id="CHEBI:16240"/>
        <dbReference type="ChEBI" id="CHEBI:18421"/>
        <dbReference type="EC" id="1.15.1.1"/>
    </reaction>
</comment>
<comment type="cofactor">
    <cofactor evidence="1">
        <name>Cu cation</name>
        <dbReference type="ChEBI" id="CHEBI:23378"/>
    </cofactor>
    <text evidence="1">Binds 1 copper ion per subunit.</text>
</comment>
<comment type="cofactor">
    <cofactor evidence="1">
        <name>Zn(2+)</name>
        <dbReference type="ChEBI" id="CHEBI:29105"/>
    </cofactor>
    <text evidence="1">Binds 1 zinc ion per subunit.</text>
</comment>
<comment type="subunit">
    <text>Homodimer.</text>
</comment>
<comment type="subcellular location">
    <subcellularLocation>
        <location evidence="3">Periplasm</location>
    </subcellularLocation>
</comment>
<comment type="similarity">
    <text evidence="3">Belongs to the Cu-Zn superoxide dismutase family.</text>
</comment>